<protein>
    <recommendedName>
        <fullName evidence="8">AA9 family lytic polysaccharide monooxygenase D</fullName>
        <shortName evidence="8">LPMO9D</shortName>
        <ecNumber evidence="5 6">1.14.99.56</ecNumber>
    </recommendedName>
    <alternativeName>
        <fullName evidence="9">Cellulase LPMO9D</fullName>
    </alternativeName>
    <alternativeName>
        <fullName evidence="9">Endo-beta-1,4-glucanase LPMO9D</fullName>
        <shortName evidence="9">Endoglucanase LPMO9D</shortName>
    </alternativeName>
    <alternativeName>
        <fullName evidence="9">Glycosyl hydrolase 61 family protein LPMO9D</fullName>
    </alternativeName>
</protein>
<feature type="signal peptide" evidence="3">
    <location>
        <begin position="1"/>
        <end position="19"/>
    </location>
</feature>
<feature type="chain" id="PRO_5003436226" description="AA9 family lytic polysaccharide monooxygenase D">
    <location>
        <begin position="20"/>
        <end position="255"/>
    </location>
</feature>
<feature type="binding site" evidence="5 11">
    <location>
        <position position="18"/>
    </location>
    <ligand>
        <name>Cu(2+)</name>
        <dbReference type="ChEBI" id="CHEBI:29036"/>
        <note>catalytic</note>
    </ligand>
</feature>
<feature type="binding site" evidence="5 11">
    <location>
        <position position="92"/>
    </location>
    <ligand>
        <name>Cu(2+)</name>
        <dbReference type="ChEBI" id="CHEBI:29036"/>
        <note>catalytic</note>
    </ligand>
</feature>
<feature type="binding site" evidence="2">
    <location>
        <position position="178"/>
    </location>
    <ligand>
        <name>O2</name>
        <dbReference type="ChEBI" id="CHEBI:15379"/>
    </ligand>
</feature>
<feature type="binding site" evidence="2">
    <location>
        <position position="184"/>
    </location>
    <ligand>
        <name>O2</name>
        <dbReference type="ChEBI" id="CHEBI:15379"/>
    </ligand>
</feature>
<feature type="binding site" evidence="5 11">
    <location>
        <position position="186"/>
    </location>
    <ligand>
        <name>Cu(2+)</name>
        <dbReference type="ChEBI" id="CHEBI:29036"/>
        <note>catalytic</note>
    </ligand>
</feature>
<feature type="glycosylation site" description="N-linked (GlcNAc...) asparagine" evidence="4">
    <location>
        <position position="152"/>
    </location>
</feature>
<feature type="glycosylation site" description="N-linked (GlcNAc...) asparagine" evidence="4">
    <location>
        <position position="220"/>
    </location>
</feature>
<feature type="disulfide bond" evidence="5 11">
    <location>
        <begin position="65"/>
        <end position="189"/>
    </location>
</feature>
<feature type="disulfide bond" evidence="5 11">
    <location>
        <begin position="104"/>
        <end position="111"/>
    </location>
</feature>
<feature type="mutagenesis site" description="Decreases cellulase activity and O(2) consumption." evidence="5">
    <original>T</original>
    <variation>A</variation>
    <location>
        <position position="91"/>
    </location>
</feature>
<feature type="mutagenesis site" description="Decreases cellulase activity and O(2) consumption, with decoupling O(2) utilization from substrate hydroxylation." evidence="5">
    <original>H</original>
    <variation>A</variation>
    <variation>E</variation>
    <variation>Q</variation>
    <location>
        <position position="178"/>
    </location>
</feature>
<feature type="mutagenesis site" description="Decreases cellulase activity and O(2) consumption." evidence="5">
    <original>Q</original>
    <variation>A</variation>
    <variation>E</variation>
    <location>
        <position position="184"/>
    </location>
</feature>
<feature type="strand" evidence="12">
    <location>
        <begin position="19"/>
        <end position="26"/>
    </location>
</feature>
<feature type="strand" evidence="12">
    <location>
        <begin position="29"/>
        <end position="32"/>
    </location>
</feature>
<feature type="helix" evidence="12">
    <location>
        <begin position="61"/>
        <end position="63"/>
    </location>
</feature>
<feature type="turn" evidence="12">
    <location>
        <begin position="64"/>
        <end position="67"/>
    </location>
</feature>
<feature type="strand" evidence="12">
    <location>
        <begin position="75"/>
        <end position="77"/>
    </location>
</feature>
<feature type="strand" evidence="12">
    <location>
        <begin position="82"/>
        <end position="90"/>
    </location>
</feature>
<feature type="strand" evidence="12">
    <location>
        <begin position="97"/>
        <end position="103"/>
    </location>
</feature>
<feature type="helix" evidence="12">
    <location>
        <begin position="108"/>
        <end position="110"/>
    </location>
</feature>
<feature type="strand" evidence="12">
    <location>
        <begin position="118"/>
        <end position="124"/>
    </location>
</feature>
<feature type="strand" evidence="12">
    <location>
        <begin position="130"/>
        <end position="133"/>
    </location>
</feature>
<feature type="helix" evidence="12">
    <location>
        <begin position="144"/>
        <end position="148"/>
    </location>
</feature>
<feature type="strand" evidence="12">
    <location>
        <begin position="151"/>
        <end position="158"/>
    </location>
</feature>
<feature type="strand" evidence="12">
    <location>
        <begin position="166"/>
        <end position="176"/>
    </location>
</feature>
<feature type="strand" evidence="12">
    <location>
        <begin position="184"/>
        <end position="194"/>
    </location>
</feature>
<feature type="helix" evidence="12">
    <location>
        <begin position="204"/>
        <end position="206"/>
    </location>
</feature>
<feature type="turn" evidence="12">
    <location>
        <begin position="210"/>
        <end position="212"/>
    </location>
</feature>
<feature type="turn" evidence="12">
    <location>
        <begin position="219"/>
        <end position="221"/>
    </location>
</feature>
<feature type="strand" evidence="12">
    <location>
        <begin position="237"/>
        <end position="239"/>
    </location>
</feature>
<comment type="function">
    <text evidence="5 6">Lytic polysaccharide monooxygenase (LPMO) that depolymerizes crystalline and amorphous polysaccharides via the oxidation of scissile alpha- or beta-(1-4)-glycosidic bonds, yielding specifically C1 oxidation product (PubMed:28257189, PubMed:29196788). Catalysis by LPMOs requires the reduction of the active-site copper from Cu(II) to Cu(I) by a reducing agent and H(2)O(2) or O(2) as a cosubstrate (PubMed:28257189). Is active on regenerated amorphous cellulose (RAC) in the presence of ascorbic acid or 3-methylcatechol (PubMed:29196788). Also acts on phosphoric acid swollen cellulose (PASC) as a substrate (PubMed:28257189).</text>
</comment>
<comment type="catalytic activity">
    <reaction evidence="5 6">
        <text>[(1-&gt;4)-beta-D-glucosyl]n+m + reduced acceptor + O2 = 4-dehydro-beta-D-glucosyl-[(1-&gt;4)-beta-D-glucosyl]n-1 + [(1-&gt;4)-beta-D-glucosyl]m + acceptor + H2O.</text>
        <dbReference type="EC" id="1.14.99.56"/>
    </reaction>
</comment>
<comment type="cofactor">
    <cofactor evidence="5">
        <name>Cu(2+)</name>
        <dbReference type="ChEBI" id="CHEBI:29036"/>
    </cofactor>
    <text evidence="5">Binds 1 copper ion per subunit.</text>
</comment>
<comment type="subcellular location">
    <subcellularLocation>
        <location evidence="10">Secreted</location>
    </subcellularLocation>
</comment>
<comment type="biotechnology">
    <text evidence="1">Lignocellulose is the most abundant polymeric composite on Earth and is a recalcitrant but promising renewable substrate for industrial biotechnology applications. Together with cellobiose dehydrogenases (CDHs) an enzymatic system capable of oxidative cellulose cleavage is formed, which increases the efficiency of cellulases and put LPMOs at focus of biofuel research.</text>
</comment>
<comment type="similarity">
    <text evidence="9">Belongs to the polysaccharide monooxygenase AA9 family.</text>
</comment>
<gene>
    <name evidence="8" type="primary">LPMO9D</name>
    <name evidence="7" type="synonym">PMO3</name>
    <name type="ORF">MYCTH_92668</name>
</gene>
<dbReference type="EC" id="1.14.99.56" evidence="5 6"/>
<dbReference type="EMBL" id="CP003003">
    <property type="protein sequence ID" value="AEO56665.1"/>
    <property type="molecule type" value="Genomic_DNA"/>
</dbReference>
<dbReference type="RefSeq" id="XP_003661910.1">
    <property type="nucleotide sequence ID" value="XM_003661862.1"/>
</dbReference>
<dbReference type="PDB" id="5UFV">
    <property type="method" value="X-ray"/>
    <property type="resolution" value="2.45 A"/>
    <property type="chains" value="A/B/C/D/E/F=18-255"/>
</dbReference>
<dbReference type="PDBsum" id="5UFV"/>
<dbReference type="SMR" id="G2QAB5"/>
<dbReference type="STRING" id="573729.G2QAB5"/>
<dbReference type="GeneID" id="11510715"/>
<dbReference type="KEGG" id="mtm:MYCTH_92668"/>
<dbReference type="VEuPathDB" id="FungiDB:MYCTH_92668"/>
<dbReference type="eggNOG" id="ENOG502SKYC">
    <property type="taxonomic scope" value="Eukaryota"/>
</dbReference>
<dbReference type="HOGENOM" id="CLU_031730_1_1_1"/>
<dbReference type="InParanoid" id="G2QAB5"/>
<dbReference type="OMA" id="WKQWTHE"/>
<dbReference type="OrthoDB" id="4849160at2759"/>
<dbReference type="Proteomes" id="UP000007322">
    <property type="component" value="Chromosome 2"/>
</dbReference>
<dbReference type="GO" id="GO:0005576">
    <property type="term" value="C:extracellular region"/>
    <property type="evidence" value="ECO:0007669"/>
    <property type="project" value="UniProtKB-SubCell"/>
</dbReference>
<dbReference type="GO" id="GO:0046872">
    <property type="term" value="F:metal ion binding"/>
    <property type="evidence" value="ECO:0007669"/>
    <property type="project" value="UniProtKB-KW"/>
</dbReference>
<dbReference type="GO" id="GO:0004497">
    <property type="term" value="F:monooxygenase activity"/>
    <property type="evidence" value="ECO:0007669"/>
    <property type="project" value="UniProtKB-KW"/>
</dbReference>
<dbReference type="GO" id="GO:0030245">
    <property type="term" value="P:cellulose catabolic process"/>
    <property type="evidence" value="ECO:0007669"/>
    <property type="project" value="UniProtKB-KW"/>
</dbReference>
<dbReference type="CDD" id="cd21175">
    <property type="entry name" value="LPMO_AA9"/>
    <property type="match status" value="1"/>
</dbReference>
<dbReference type="Gene3D" id="2.70.50.70">
    <property type="match status" value="1"/>
</dbReference>
<dbReference type="InterPro" id="IPR049892">
    <property type="entry name" value="AA9"/>
</dbReference>
<dbReference type="InterPro" id="IPR005103">
    <property type="entry name" value="AA9_LPMO"/>
</dbReference>
<dbReference type="PANTHER" id="PTHR33353:SF19">
    <property type="entry name" value="GLYCOSYLHYDROLASE FAMILY 61-8 PROTEIN"/>
    <property type="match status" value="1"/>
</dbReference>
<dbReference type="PANTHER" id="PTHR33353">
    <property type="entry name" value="PUTATIVE (AFU_ORTHOLOGUE AFUA_1G12560)-RELATED"/>
    <property type="match status" value="1"/>
</dbReference>
<dbReference type="Pfam" id="PF03443">
    <property type="entry name" value="AA9"/>
    <property type="match status" value="1"/>
</dbReference>
<accession>G2QAB5</accession>
<name>LP9D_THET4</name>
<sequence>MYRTLGSIALLAGGAAAHGAVTSYNIAGKDYPGYSGFAPTGQDVIQWQWPDYNPVLSASDPKLRCNGGTGAALYAEAAPGDTITATWAQWTHSQGPILVWMYKCPGDFSSCDGSGAGWFKIDEAGFHGDGTTVFLDTETPSGWDIAKLVGGNKSWSSKIPDGLAPGNYLVRHELIALHQANNPQFYPECAQIKVTGSGTAEPAASYKAAIPGYCQQSDPNISFNINDHSLPQEYKIPGPPVFKGTASAKARAFQA</sequence>
<reference key="1">
    <citation type="journal article" date="2011" name="Nat. Biotechnol.">
        <title>Comparative genomic analysis of the thermophilic biomass-degrading fungi Myceliophthora thermophila and Thielavia terrestris.</title>
        <authorList>
            <person name="Berka R.M."/>
            <person name="Grigoriev I.V."/>
            <person name="Otillar R."/>
            <person name="Salamov A."/>
            <person name="Grimwood J."/>
            <person name="Reid I."/>
            <person name="Ishmael N."/>
            <person name="John T."/>
            <person name="Darmond C."/>
            <person name="Moisan M.-C."/>
            <person name="Henrissat B."/>
            <person name="Coutinho P.M."/>
            <person name="Lombard V."/>
            <person name="Natvig D.O."/>
            <person name="Lindquist E."/>
            <person name="Schmutz J."/>
            <person name="Lucas S."/>
            <person name="Harris P."/>
            <person name="Powlowski J."/>
            <person name="Bellemare A."/>
            <person name="Taylor D."/>
            <person name="Butler G."/>
            <person name="de Vries R.P."/>
            <person name="Allijn I.E."/>
            <person name="van den Brink J."/>
            <person name="Ushinsky S."/>
            <person name="Storms R."/>
            <person name="Powell A.J."/>
            <person name="Paulsen I.T."/>
            <person name="Elbourne L.D.H."/>
            <person name="Baker S.E."/>
            <person name="Magnuson J."/>
            <person name="LaBoissiere S."/>
            <person name="Clutterbuck A.J."/>
            <person name="Martinez D."/>
            <person name="Wogulis M."/>
            <person name="de Leon A.L."/>
            <person name="Rey M.W."/>
            <person name="Tsang A."/>
        </authorList>
    </citation>
    <scope>NUCLEOTIDE SEQUENCE [LARGE SCALE GENOMIC DNA]</scope>
    <source>
        <strain>ATCC 42464 / BCRC 31852 / DSM 1799</strain>
    </source>
</reference>
<reference key="2">
    <citation type="journal article" date="2018" name="Appl. Microbiol. Biotechnol.">
        <title>Quantification of the catalytic performance of C1-cellulose-specific lytic polysaccharide monooxygenases.</title>
        <authorList>
            <person name="Frommhagen M."/>
            <person name="Westphal A.H."/>
            <person name="Hilgers R."/>
            <person name="Koetsier M.J."/>
            <person name="Hinz S.W.A."/>
            <person name="Visser J."/>
            <person name="Gruppen H."/>
            <person name="van Berkel W.J.H."/>
            <person name="Kabel M.A."/>
        </authorList>
    </citation>
    <scope>FUNCTION</scope>
    <scope>CATALYTIC ACTIVITY</scope>
</reference>
<reference evidence="11" key="3">
    <citation type="journal article" date="2017" name="ACS Chem. Biol.">
        <title>The role of the secondary coordination sphere in a fungal polysaccharide monooxygenase.</title>
        <authorList>
            <person name="Span E.A."/>
            <person name="Suess D.L."/>
            <person name="Deller M.C."/>
            <person name="Britt R.D."/>
            <person name="Marletta M.A."/>
        </authorList>
    </citation>
    <scope>X-RAY CRYSTALLOGRAPHY (2.45 ANGSTROMS) OF 18-255 IN COMPLEX WITH COPPER</scope>
    <scope>DISULFIDE BONDS</scope>
    <scope>FUNCTION</scope>
    <scope>CATALYTIC ACTIVITY</scope>
    <scope>MUTAGENESIS OF THR-91; HIS-178 AND GLN-184</scope>
</reference>
<proteinExistence type="evidence at protein level"/>
<organism>
    <name type="scientific">Thermothelomyces thermophilus (strain ATCC 42464 / BCRC 31852 / DSM 1799)</name>
    <name type="common">Sporotrichum thermophile</name>
    <dbReference type="NCBI Taxonomy" id="573729"/>
    <lineage>
        <taxon>Eukaryota</taxon>
        <taxon>Fungi</taxon>
        <taxon>Dikarya</taxon>
        <taxon>Ascomycota</taxon>
        <taxon>Pezizomycotina</taxon>
        <taxon>Sordariomycetes</taxon>
        <taxon>Sordariomycetidae</taxon>
        <taxon>Sordariales</taxon>
        <taxon>Chaetomiaceae</taxon>
        <taxon>Thermothelomyces</taxon>
    </lineage>
</organism>
<keyword id="KW-0002">3D-structure</keyword>
<keyword id="KW-0119">Carbohydrate metabolism</keyword>
<keyword id="KW-0136">Cellulose degradation</keyword>
<keyword id="KW-0186">Copper</keyword>
<keyword id="KW-1015">Disulfide bond</keyword>
<keyword id="KW-0325">Glycoprotein</keyword>
<keyword id="KW-0479">Metal-binding</keyword>
<keyword id="KW-0503">Monooxygenase</keyword>
<keyword id="KW-0560">Oxidoreductase</keyword>
<keyword id="KW-0624">Polysaccharide degradation</keyword>
<keyword id="KW-1185">Reference proteome</keyword>
<keyword id="KW-0964">Secreted</keyword>
<keyword id="KW-0732">Signal</keyword>
<evidence type="ECO:0000250" key="1">
    <source>
        <dbReference type="UniProtKB" id="G2QCJ3"/>
    </source>
</evidence>
<evidence type="ECO:0000250" key="2">
    <source>
        <dbReference type="UniProtKB" id="Q1K8B6"/>
    </source>
</evidence>
<evidence type="ECO:0000255" key="3"/>
<evidence type="ECO:0000255" key="4">
    <source>
        <dbReference type="PROSITE-ProRule" id="PRU00498"/>
    </source>
</evidence>
<evidence type="ECO:0000269" key="5">
    <source>
    </source>
</evidence>
<evidence type="ECO:0000269" key="6">
    <source>
    </source>
</evidence>
<evidence type="ECO:0000303" key="7">
    <source>
    </source>
</evidence>
<evidence type="ECO:0000303" key="8">
    <source>
    </source>
</evidence>
<evidence type="ECO:0000305" key="9"/>
<evidence type="ECO:0000305" key="10">
    <source>
    </source>
</evidence>
<evidence type="ECO:0007744" key="11">
    <source>
        <dbReference type="PDB" id="5UFV"/>
    </source>
</evidence>
<evidence type="ECO:0007829" key="12">
    <source>
        <dbReference type="PDB" id="5UFV"/>
    </source>
</evidence>